<gene>
    <name evidence="1" type="primary">dapD</name>
    <name type="ordered locus">BL1734</name>
</gene>
<dbReference type="EC" id="2.3.1.117" evidence="1"/>
<dbReference type="EMBL" id="AE014295">
    <property type="protein sequence ID" value="AAN25518.1"/>
    <property type="molecule type" value="Genomic_DNA"/>
</dbReference>
<dbReference type="RefSeq" id="NP_696882.1">
    <property type="nucleotide sequence ID" value="NC_004307.2"/>
</dbReference>
<dbReference type="RefSeq" id="WP_007052463.1">
    <property type="nucleotide sequence ID" value="NC_004307.2"/>
</dbReference>
<dbReference type="SMR" id="Q8G3M4"/>
<dbReference type="STRING" id="206672.BL1734"/>
<dbReference type="EnsemblBacteria" id="AAN25518">
    <property type="protein sequence ID" value="AAN25518"/>
    <property type="gene ID" value="BL1734"/>
</dbReference>
<dbReference type="KEGG" id="blo:BL1734"/>
<dbReference type="PATRIC" id="fig|206672.9.peg.1790"/>
<dbReference type="HOGENOM" id="CLU_057490_1_0_11"/>
<dbReference type="OrthoDB" id="9782799at2"/>
<dbReference type="PhylomeDB" id="Q8G3M4"/>
<dbReference type="UniPathway" id="UPA00034">
    <property type="reaction ID" value="UER00019"/>
</dbReference>
<dbReference type="Proteomes" id="UP000000439">
    <property type="component" value="Chromosome"/>
</dbReference>
<dbReference type="GO" id="GO:0005737">
    <property type="term" value="C:cytoplasm"/>
    <property type="evidence" value="ECO:0007669"/>
    <property type="project" value="UniProtKB-SubCell"/>
</dbReference>
<dbReference type="GO" id="GO:0008666">
    <property type="term" value="F:2,3,4,5-tetrahydropyridine-2,6-dicarboxylate N-succinyltransferase activity"/>
    <property type="evidence" value="ECO:0007669"/>
    <property type="project" value="UniProtKB-UniRule"/>
</dbReference>
<dbReference type="GO" id="GO:0000287">
    <property type="term" value="F:magnesium ion binding"/>
    <property type="evidence" value="ECO:0007669"/>
    <property type="project" value="UniProtKB-UniRule"/>
</dbReference>
<dbReference type="GO" id="GO:0019877">
    <property type="term" value="P:diaminopimelate biosynthetic process"/>
    <property type="evidence" value="ECO:0007669"/>
    <property type="project" value="UniProtKB-UniRule"/>
</dbReference>
<dbReference type="GO" id="GO:0009089">
    <property type="term" value="P:lysine biosynthetic process via diaminopimelate"/>
    <property type="evidence" value="ECO:0007669"/>
    <property type="project" value="UniProtKB-UniRule"/>
</dbReference>
<dbReference type="CDD" id="cd04649">
    <property type="entry name" value="LbH_THP_succinylT_putative"/>
    <property type="match status" value="1"/>
</dbReference>
<dbReference type="Gene3D" id="3.30.70.2010">
    <property type="match status" value="1"/>
</dbReference>
<dbReference type="Gene3D" id="2.160.10.10">
    <property type="entry name" value="Hexapeptide repeat proteins"/>
    <property type="match status" value="1"/>
</dbReference>
<dbReference type="Gene3D" id="3.30.60.70">
    <property type="entry name" value="Trimeric LpxA-like enzymes"/>
    <property type="match status" value="1"/>
</dbReference>
<dbReference type="HAMAP" id="MF_02122">
    <property type="entry name" value="DapD_type2"/>
    <property type="match status" value="1"/>
</dbReference>
<dbReference type="InterPro" id="IPR019875">
    <property type="entry name" value="DapD_actinobacteria"/>
</dbReference>
<dbReference type="InterPro" id="IPR001451">
    <property type="entry name" value="Hexapep"/>
</dbReference>
<dbReference type="InterPro" id="IPR032784">
    <property type="entry name" value="THDPS_M"/>
</dbReference>
<dbReference type="InterPro" id="IPR038361">
    <property type="entry name" value="THDPS_M_sf"/>
</dbReference>
<dbReference type="InterPro" id="IPR011004">
    <property type="entry name" value="Trimer_LpxA-like_sf"/>
</dbReference>
<dbReference type="InterPro" id="IPR026586">
    <property type="entry name" value="Type2_DapD"/>
</dbReference>
<dbReference type="NCBIfam" id="TIGR03535">
    <property type="entry name" value="DapD_actino"/>
    <property type="match status" value="1"/>
</dbReference>
<dbReference type="Pfam" id="PF14602">
    <property type="entry name" value="Hexapep_2"/>
    <property type="match status" value="1"/>
</dbReference>
<dbReference type="Pfam" id="PF14789">
    <property type="entry name" value="THDPS_M"/>
    <property type="match status" value="1"/>
</dbReference>
<dbReference type="SUPFAM" id="SSF51161">
    <property type="entry name" value="Trimeric LpxA-like enzymes"/>
    <property type="match status" value="1"/>
</dbReference>
<sequence>MSEERTAWGWGLASVDAAGTTLDVWYPELNLGEAPAESDRPNHNFGTLAHDEADARGIRRVPVFVVSQLDEPISNAADAYLKLHLMSMRMAKPNTLNLDGIFAQLANVVWTNYGPFAVEDFTLRKADVERASTEAALAFASQAGLPAAAPAATVNVFGVDKFPRMIDYVVPTGVRLGDADRVRLGAYLSSGTTVMHAGFVNFNAGTLGVSMVEGRVSQGVVVGDGSDIGGGASIMGTLSGGGKLRNSIGEHSLLGANAGIGISLGDNCTVEAGLYITAGTKITIWDKAKAAAGEPLEVVKGAELSGKDNILFIRNSVNGRIEARYRKVGIELNAKLHKN</sequence>
<protein>
    <recommendedName>
        <fullName evidence="1">2,3,4,5-tetrahydropyridine-2,6-dicarboxylate N-succinyltransferase</fullName>
        <ecNumber evidence="1">2.3.1.117</ecNumber>
    </recommendedName>
    <alternativeName>
        <fullName evidence="1">Tetrahydrodipicolinate N-succinyltransferase</fullName>
        <shortName evidence="1">THDP succinyltransferase</shortName>
        <shortName evidence="1">THP succinyltransferase</shortName>
    </alternativeName>
    <alternativeName>
        <fullName evidence="1">Tetrahydropicolinate succinylase</fullName>
    </alternativeName>
</protein>
<proteinExistence type="inferred from homology"/>
<keyword id="KW-0012">Acyltransferase</keyword>
<keyword id="KW-0028">Amino-acid biosynthesis</keyword>
<keyword id="KW-0963">Cytoplasm</keyword>
<keyword id="KW-0220">Diaminopimelate biosynthesis</keyword>
<keyword id="KW-0457">Lysine biosynthesis</keyword>
<keyword id="KW-0460">Magnesium</keyword>
<keyword id="KW-0479">Metal-binding</keyword>
<keyword id="KW-1185">Reference proteome</keyword>
<keyword id="KW-0808">Transferase</keyword>
<feature type="chain" id="PRO_0000412256" description="2,3,4,5-tetrahydropyridine-2,6-dicarboxylate N-succinyltransferase">
    <location>
        <begin position="1"/>
        <end position="339"/>
    </location>
</feature>
<feature type="active site" description="Acyl-anhydride intermediate" evidence="1">
    <location>
        <position position="213"/>
    </location>
</feature>
<feature type="binding site" evidence="1">
    <location>
        <position position="180"/>
    </location>
    <ligand>
        <name>Mg(2+)</name>
        <dbReference type="ChEBI" id="CHEBI:18420"/>
        <label>1</label>
        <note>ligand shared between trimeric partners</note>
    </ligand>
</feature>
<feature type="binding site" evidence="1">
    <location>
        <position position="215"/>
    </location>
    <ligand>
        <name>succinyl-CoA</name>
        <dbReference type="ChEBI" id="CHEBI:57292"/>
    </ligand>
</feature>
<feature type="binding site" evidence="1">
    <location>
        <position position="230"/>
    </location>
    <ligand>
        <name>succinyl-CoA</name>
        <dbReference type="ChEBI" id="CHEBI:57292"/>
    </ligand>
</feature>
<feature type="binding site" evidence="1">
    <location>
        <position position="233"/>
    </location>
    <ligand>
        <name>succinyl-CoA</name>
        <dbReference type="ChEBI" id="CHEBI:57292"/>
    </ligand>
</feature>
<feature type="binding site" evidence="1">
    <location>
        <position position="256"/>
    </location>
    <ligand>
        <name>succinyl-CoA</name>
        <dbReference type="ChEBI" id="CHEBI:57292"/>
    </ligand>
</feature>
<feature type="binding site" evidence="1">
    <location>
        <begin position="271"/>
        <end position="272"/>
    </location>
    <ligand>
        <name>succinyl-CoA</name>
        <dbReference type="ChEBI" id="CHEBI:57292"/>
    </ligand>
</feature>
<feature type="binding site" evidence="1">
    <location>
        <position position="279"/>
    </location>
    <ligand>
        <name>succinyl-CoA</name>
        <dbReference type="ChEBI" id="CHEBI:57292"/>
    </ligand>
</feature>
<feature type="binding site" evidence="1">
    <location>
        <position position="300"/>
    </location>
    <ligand>
        <name>succinyl-CoA</name>
        <dbReference type="ChEBI" id="CHEBI:57292"/>
    </ligand>
</feature>
<organism>
    <name type="scientific">Bifidobacterium longum (strain NCC 2705)</name>
    <dbReference type="NCBI Taxonomy" id="206672"/>
    <lineage>
        <taxon>Bacteria</taxon>
        <taxon>Bacillati</taxon>
        <taxon>Actinomycetota</taxon>
        <taxon>Actinomycetes</taxon>
        <taxon>Bifidobacteriales</taxon>
        <taxon>Bifidobacteriaceae</taxon>
        <taxon>Bifidobacterium</taxon>
    </lineage>
</organism>
<reference key="1">
    <citation type="journal article" date="2002" name="Proc. Natl. Acad. Sci. U.S.A.">
        <title>The genome sequence of Bifidobacterium longum reflects its adaptation to the human gastrointestinal tract.</title>
        <authorList>
            <person name="Schell M.A."/>
            <person name="Karmirantzou M."/>
            <person name="Snel B."/>
            <person name="Vilanova D."/>
            <person name="Berger B."/>
            <person name="Pessi G."/>
            <person name="Zwahlen M.-C."/>
            <person name="Desiere F."/>
            <person name="Bork P."/>
            <person name="Delley M."/>
            <person name="Pridmore R.D."/>
            <person name="Arigoni F."/>
        </authorList>
    </citation>
    <scope>NUCLEOTIDE SEQUENCE [LARGE SCALE GENOMIC DNA]</scope>
    <source>
        <strain>NCC 2705</strain>
    </source>
</reference>
<accession>Q8G3M4</accession>
<comment type="function">
    <text evidence="1">Catalyzes the conversion of the cyclic tetrahydrodipicolinate (THDP) into the acyclic N-succinyl-L-2-amino-6-oxopimelate using succinyl-CoA.</text>
</comment>
<comment type="catalytic activity">
    <reaction evidence="1">
        <text>(S)-2,3,4,5-tetrahydrodipicolinate + succinyl-CoA + H2O = (S)-2-succinylamino-6-oxoheptanedioate + CoA</text>
        <dbReference type="Rhea" id="RHEA:17325"/>
        <dbReference type="ChEBI" id="CHEBI:15377"/>
        <dbReference type="ChEBI" id="CHEBI:15685"/>
        <dbReference type="ChEBI" id="CHEBI:16845"/>
        <dbReference type="ChEBI" id="CHEBI:57287"/>
        <dbReference type="ChEBI" id="CHEBI:57292"/>
        <dbReference type="EC" id="2.3.1.117"/>
    </reaction>
</comment>
<comment type="pathway">
    <text evidence="1">Amino-acid biosynthesis; L-lysine biosynthesis via DAP pathway; LL-2,6-diaminopimelate from (S)-tetrahydrodipicolinate (succinylase route): step 1/3.</text>
</comment>
<comment type="subunit">
    <text evidence="1">Homotrimer.</text>
</comment>
<comment type="subcellular location">
    <subcellularLocation>
        <location evidence="1">Cytoplasm</location>
    </subcellularLocation>
</comment>
<comment type="similarity">
    <text evidence="1">Belongs to the type 2 tetrahydrodipicolinate N-succinyltransferase family.</text>
</comment>
<evidence type="ECO:0000255" key="1">
    <source>
        <dbReference type="HAMAP-Rule" id="MF_02122"/>
    </source>
</evidence>
<name>DAPD_BIFLO</name>